<evidence type="ECO:0000255" key="1">
    <source>
        <dbReference type="HAMAP-Rule" id="MF_00195"/>
    </source>
</evidence>
<reference key="1">
    <citation type="journal article" date="2006" name="Proc. Natl. Acad. Sci. U.S.A.">
        <title>Comparative genomics of the lactic acid bacteria.</title>
        <authorList>
            <person name="Makarova K.S."/>
            <person name="Slesarev A."/>
            <person name="Wolf Y.I."/>
            <person name="Sorokin A."/>
            <person name="Mirkin B."/>
            <person name="Koonin E.V."/>
            <person name="Pavlov A."/>
            <person name="Pavlova N."/>
            <person name="Karamychev V."/>
            <person name="Polouchine N."/>
            <person name="Shakhova V."/>
            <person name="Grigoriev I."/>
            <person name="Lou Y."/>
            <person name="Rohksar D."/>
            <person name="Lucas S."/>
            <person name="Huang K."/>
            <person name="Goodstein D.M."/>
            <person name="Hawkins T."/>
            <person name="Plengvidhya V."/>
            <person name="Welker D."/>
            <person name="Hughes J."/>
            <person name="Goh Y."/>
            <person name="Benson A."/>
            <person name="Baldwin K."/>
            <person name="Lee J.-H."/>
            <person name="Diaz-Muniz I."/>
            <person name="Dosti B."/>
            <person name="Smeianov V."/>
            <person name="Wechter W."/>
            <person name="Barabote R."/>
            <person name="Lorca G."/>
            <person name="Altermann E."/>
            <person name="Barrangou R."/>
            <person name="Ganesan B."/>
            <person name="Xie Y."/>
            <person name="Rawsthorne H."/>
            <person name="Tamir D."/>
            <person name="Parker C."/>
            <person name="Breidt F."/>
            <person name="Broadbent J.R."/>
            <person name="Hutkins R."/>
            <person name="O'Sullivan D."/>
            <person name="Steele J."/>
            <person name="Unlu G."/>
            <person name="Saier M.H. Jr."/>
            <person name="Klaenhammer T."/>
            <person name="Richardson P."/>
            <person name="Kozyavkin S."/>
            <person name="Weimer B.C."/>
            <person name="Mills D.A."/>
        </authorList>
    </citation>
    <scope>NUCLEOTIDE SEQUENCE [LARGE SCALE GENOMIC DNA]</scope>
    <source>
        <strain>ATCC 8293 / DSM 20343 / BCRC 11652 / CCM 1803 / JCM 6124 / NCDO 523 / NBRC 100496 / NCIMB 8023 / NCTC 12954 / NRRL B-1118 / 37Y</strain>
    </source>
</reference>
<gene>
    <name evidence="1" type="primary">der</name>
    <name type="synonym">engA</name>
    <name type="ordered locus">LEUM_1291</name>
</gene>
<name>DER_LEUMM</name>
<proteinExistence type="inferred from homology"/>
<dbReference type="EMBL" id="CP000414">
    <property type="protein sequence ID" value="ABJ62388.1"/>
    <property type="molecule type" value="Genomic_DNA"/>
</dbReference>
<dbReference type="RefSeq" id="WP_011680007.1">
    <property type="nucleotide sequence ID" value="NC_008531.1"/>
</dbReference>
<dbReference type="SMR" id="Q03WN4"/>
<dbReference type="EnsemblBacteria" id="ABJ62388">
    <property type="protein sequence ID" value="ABJ62388"/>
    <property type="gene ID" value="LEUM_1291"/>
</dbReference>
<dbReference type="GeneID" id="29576774"/>
<dbReference type="KEGG" id="lme:LEUM_1291"/>
<dbReference type="eggNOG" id="COG1160">
    <property type="taxonomic scope" value="Bacteria"/>
</dbReference>
<dbReference type="HOGENOM" id="CLU_016077_6_2_9"/>
<dbReference type="Proteomes" id="UP000000362">
    <property type="component" value="Chromosome"/>
</dbReference>
<dbReference type="GO" id="GO:0005525">
    <property type="term" value="F:GTP binding"/>
    <property type="evidence" value="ECO:0007669"/>
    <property type="project" value="UniProtKB-UniRule"/>
</dbReference>
<dbReference type="GO" id="GO:0043022">
    <property type="term" value="F:ribosome binding"/>
    <property type="evidence" value="ECO:0007669"/>
    <property type="project" value="TreeGrafter"/>
</dbReference>
<dbReference type="GO" id="GO:0042254">
    <property type="term" value="P:ribosome biogenesis"/>
    <property type="evidence" value="ECO:0007669"/>
    <property type="project" value="UniProtKB-KW"/>
</dbReference>
<dbReference type="CDD" id="cd01894">
    <property type="entry name" value="EngA1"/>
    <property type="match status" value="1"/>
</dbReference>
<dbReference type="CDD" id="cd01895">
    <property type="entry name" value="EngA2"/>
    <property type="match status" value="1"/>
</dbReference>
<dbReference type="FunFam" id="3.30.300.20:FF:000004">
    <property type="entry name" value="GTPase Der"/>
    <property type="match status" value="1"/>
</dbReference>
<dbReference type="FunFam" id="3.40.50.300:FF:000040">
    <property type="entry name" value="GTPase Der"/>
    <property type="match status" value="1"/>
</dbReference>
<dbReference type="FunFam" id="3.40.50.300:FF:000057">
    <property type="entry name" value="GTPase Der"/>
    <property type="match status" value="1"/>
</dbReference>
<dbReference type="Gene3D" id="3.30.300.20">
    <property type="match status" value="1"/>
</dbReference>
<dbReference type="Gene3D" id="3.40.50.300">
    <property type="entry name" value="P-loop containing nucleotide triphosphate hydrolases"/>
    <property type="match status" value="2"/>
</dbReference>
<dbReference type="HAMAP" id="MF_00195">
    <property type="entry name" value="GTPase_Der"/>
    <property type="match status" value="1"/>
</dbReference>
<dbReference type="InterPro" id="IPR031166">
    <property type="entry name" value="G_ENGA"/>
</dbReference>
<dbReference type="InterPro" id="IPR006073">
    <property type="entry name" value="GTP-bd"/>
</dbReference>
<dbReference type="InterPro" id="IPR016484">
    <property type="entry name" value="GTPase_Der"/>
</dbReference>
<dbReference type="InterPro" id="IPR032859">
    <property type="entry name" value="KH_dom-like"/>
</dbReference>
<dbReference type="InterPro" id="IPR015946">
    <property type="entry name" value="KH_dom-like_a/b"/>
</dbReference>
<dbReference type="InterPro" id="IPR027417">
    <property type="entry name" value="P-loop_NTPase"/>
</dbReference>
<dbReference type="InterPro" id="IPR005225">
    <property type="entry name" value="Small_GTP-bd"/>
</dbReference>
<dbReference type="NCBIfam" id="TIGR03594">
    <property type="entry name" value="GTPase_EngA"/>
    <property type="match status" value="1"/>
</dbReference>
<dbReference type="NCBIfam" id="TIGR00231">
    <property type="entry name" value="small_GTP"/>
    <property type="match status" value="2"/>
</dbReference>
<dbReference type="PANTHER" id="PTHR43834">
    <property type="entry name" value="GTPASE DER"/>
    <property type="match status" value="1"/>
</dbReference>
<dbReference type="PANTHER" id="PTHR43834:SF6">
    <property type="entry name" value="GTPASE DER"/>
    <property type="match status" value="1"/>
</dbReference>
<dbReference type="Pfam" id="PF14714">
    <property type="entry name" value="KH_dom-like"/>
    <property type="match status" value="1"/>
</dbReference>
<dbReference type="Pfam" id="PF01926">
    <property type="entry name" value="MMR_HSR1"/>
    <property type="match status" value="2"/>
</dbReference>
<dbReference type="PIRSF" id="PIRSF006485">
    <property type="entry name" value="GTP-binding_EngA"/>
    <property type="match status" value="1"/>
</dbReference>
<dbReference type="PRINTS" id="PR00326">
    <property type="entry name" value="GTP1OBG"/>
</dbReference>
<dbReference type="SUPFAM" id="SSF52540">
    <property type="entry name" value="P-loop containing nucleoside triphosphate hydrolases"/>
    <property type="match status" value="2"/>
</dbReference>
<dbReference type="PROSITE" id="PS51712">
    <property type="entry name" value="G_ENGA"/>
    <property type="match status" value="2"/>
</dbReference>
<protein>
    <recommendedName>
        <fullName evidence="1">GTPase Der</fullName>
    </recommendedName>
    <alternativeName>
        <fullName evidence="1">GTP-binding protein EngA</fullName>
    </alternativeName>
</protein>
<accession>Q03WN4</accession>
<comment type="function">
    <text evidence="1">GTPase that plays an essential role in the late steps of ribosome biogenesis.</text>
</comment>
<comment type="subunit">
    <text evidence="1">Associates with the 50S ribosomal subunit.</text>
</comment>
<comment type="similarity">
    <text evidence="1">Belongs to the TRAFAC class TrmE-Era-EngA-EngB-Septin-like GTPase superfamily. EngA (Der) GTPase family.</text>
</comment>
<organism>
    <name type="scientific">Leuconostoc mesenteroides subsp. mesenteroides (strain ATCC 8293 / DSM 20343 / BCRC 11652 / CCM 1803 / JCM 6124 / NCDO 523 / NBRC 100496 / NCIMB 8023 / NCTC 12954 / NRRL B-1118 / 37Y)</name>
    <dbReference type="NCBI Taxonomy" id="203120"/>
    <lineage>
        <taxon>Bacteria</taxon>
        <taxon>Bacillati</taxon>
        <taxon>Bacillota</taxon>
        <taxon>Bacilli</taxon>
        <taxon>Lactobacillales</taxon>
        <taxon>Lactobacillaceae</taxon>
        <taxon>Leuconostoc</taxon>
    </lineage>
</organism>
<keyword id="KW-0342">GTP-binding</keyword>
<keyword id="KW-0547">Nucleotide-binding</keyword>
<keyword id="KW-1185">Reference proteome</keyword>
<keyword id="KW-0677">Repeat</keyword>
<keyword id="KW-0690">Ribosome biogenesis</keyword>
<feature type="chain" id="PRO_1000011658" description="GTPase Der">
    <location>
        <begin position="1"/>
        <end position="436"/>
    </location>
</feature>
<feature type="domain" description="EngA-type G 1">
    <location>
        <begin position="4"/>
        <end position="167"/>
    </location>
</feature>
<feature type="domain" description="EngA-type G 2">
    <location>
        <begin position="175"/>
        <end position="351"/>
    </location>
</feature>
<feature type="domain" description="KH-like" evidence="1">
    <location>
        <begin position="352"/>
        <end position="436"/>
    </location>
</feature>
<feature type="binding site" evidence="1">
    <location>
        <begin position="10"/>
        <end position="17"/>
    </location>
    <ligand>
        <name>GTP</name>
        <dbReference type="ChEBI" id="CHEBI:37565"/>
        <label>1</label>
    </ligand>
</feature>
<feature type="binding site" evidence="1">
    <location>
        <begin position="57"/>
        <end position="61"/>
    </location>
    <ligand>
        <name>GTP</name>
        <dbReference type="ChEBI" id="CHEBI:37565"/>
        <label>1</label>
    </ligand>
</feature>
<feature type="binding site" evidence="1">
    <location>
        <begin position="119"/>
        <end position="122"/>
    </location>
    <ligand>
        <name>GTP</name>
        <dbReference type="ChEBI" id="CHEBI:37565"/>
        <label>1</label>
    </ligand>
</feature>
<feature type="binding site" evidence="1">
    <location>
        <begin position="181"/>
        <end position="188"/>
    </location>
    <ligand>
        <name>GTP</name>
        <dbReference type="ChEBI" id="CHEBI:37565"/>
        <label>2</label>
    </ligand>
</feature>
<feature type="binding site" evidence="1">
    <location>
        <begin position="229"/>
        <end position="233"/>
    </location>
    <ligand>
        <name>GTP</name>
        <dbReference type="ChEBI" id="CHEBI:37565"/>
        <label>2</label>
    </ligand>
</feature>
<feature type="binding site" evidence="1">
    <location>
        <begin position="294"/>
        <end position="297"/>
    </location>
    <ligand>
        <name>GTP</name>
        <dbReference type="ChEBI" id="CHEBI:37565"/>
        <label>2</label>
    </ligand>
</feature>
<sequence>MSAPIVAIVGRPNVGKSTIFNRMAGERIAIVEDMPGVTRDRLYAPAEWLNYEFRMIDTGGIEIGDAPFLAEIRGQVELAINEADVIVMVVSGREGLTEADEVVARMLYKSDKPVVLAVNKVDNPEMRHDVYDFYALGLGDPFPVSGSHGLGLGDLLDEIVKHFPDEAAEQEDDAIRFSIIGRPNVGKSSIVNAMLGEKRVIVSDIEGTTRDAIDTRFVTEEGDEFVMVDTAGMRKRGKIYENTEKYSVMRAMKAIDDSNVILMVIDAEAGIREQDKHVAGFAHEAGRAMIIVVNKWDAIEKNDRTMSDFENLIREEFKFLDYAPIVFVSAKTGQRLDRLPQMVKDVDDNHRKRITSSTLNDVIMDAIAINPTPSDNGRRLRVYYATQVATQPPTFVIFVNDVELMHFSYERFLENKIRESFDFTGTPIKLIVRARK</sequence>